<feature type="chain" id="PRO_0000244440" description="Uncharacterized ABC transporter ATP-binding protein YDR061W">
    <location>
        <begin position="1"/>
        <end position="539"/>
    </location>
</feature>
<feature type="domain" description="ABC transporter 1" evidence="1">
    <location>
        <begin position="8"/>
        <end position="265"/>
    </location>
</feature>
<feature type="domain" description="ABC transporter 2" evidence="1">
    <location>
        <begin position="307"/>
        <end position="537"/>
    </location>
</feature>
<feature type="binding site" evidence="1">
    <location>
        <begin position="339"/>
        <end position="346"/>
    </location>
    <ligand>
        <name>ATP</name>
        <dbReference type="ChEBI" id="CHEBI:30616"/>
    </ligand>
</feature>
<reference key="1">
    <citation type="journal article" date="1996" name="Yeast">
        <title>Nucleotide sequence analysis of a 32,500 bp region of the right arm of Saccharomyces cerevisiae chromosome IV.</title>
        <authorList>
            <person name="Brandt P."/>
            <person name="Ramlow S."/>
            <person name="Otto B."/>
            <person name="Bloecker H."/>
        </authorList>
    </citation>
    <scope>NUCLEOTIDE SEQUENCE [GENOMIC DNA]</scope>
</reference>
<reference key="2">
    <citation type="journal article" date="1997" name="Nature">
        <title>The nucleotide sequence of Saccharomyces cerevisiae chromosome IV.</title>
        <authorList>
            <person name="Jacq C."/>
            <person name="Alt-Moerbe J."/>
            <person name="Andre B."/>
            <person name="Arnold W."/>
            <person name="Bahr A."/>
            <person name="Ballesta J.P.G."/>
            <person name="Bargues M."/>
            <person name="Baron L."/>
            <person name="Becker A."/>
            <person name="Biteau N."/>
            <person name="Bloecker H."/>
            <person name="Blugeon C."/>
            <person name="Boskovic J."/>
            <person name="Brandt P."/>
            <person name="Brueckner M."/>
            <person name="Buitrago M.J."/>
            <person name="Coster F."/>
            <person name="Delaveau T."/>
            <person name="del Rey F."/>
            <person name="Dujon B."/>
            <person name="Eide L.G."/>
            <person name="Garcia-Cantalejo J.M."/>
            <person name="Goffeau A."/>
            <person name="Gomez-Peris A."/>
            <person name="Granotier C."/>
            <person name="Hanemann V."/>
            <person name="Hankeln T."/>
            <person name="Hoheisel J.D."/>
            <person name="Jaeger W."/>
            <person name="Jimenez A."/>
            <person name="Jonniaux J.-L."/>
            <person name="Kraemer C."/>
            <person name="Kuester H."/>
            <person name="Laamanen P."/>
            <person name="Legros Y."/>
            <person name="Louis E.J."/>
            <person name="Moeller-Rieker S."/>
            <person name="Monnet A."/>
            <person name="Moro M."/>
            <person name="Mueller-Auer S."/>
            <person name="Nussbaumer B."/>
            <person name="Paricio N."/>
            <person name="Paulin L."/>
            <person name="Perea J."/>
            <person name="Perez-Alonso M."/>
            <person name="Perez-Ortin J.E."/>
            <person name="Pohl T.M."/>
            <person name="Prydz H."/>
            <person name="Purnelle B."/>
            <person name="Rasmussen S.W."/>
            <person name="Remacha M.A."/>
            <person name="Revuelta J.L."/>
            <person name="Rieger M."/>
            <person name="Salom D."/>
            <person name="Saluz H.P."/>
            <person name="Saiz J.E."/>
            <person name="Saren A.-M."/>
            <person name="Schaefer M."/>
            <person name="Scharfe M."/>
            <person name="Schmidt E.R."/>
            <person name="Schneider C."/>
            <person name="Scholler P."/>
            <person name="Schwarz S."/>
            <person name="Soler-Mira A."/>
            <person name="Urrestarazu L.A."/>
            <person name="Verhasselt P."/>
            <person name="Vissers S."/>
            <person name="Voet M."/>
            <person name="Volckaert G."/>
            <person name="Wagner G."/>
            <person name="Wambutt R."/>
            <person name="Wedler E."/>
            <person name="Wedler H."/>
            <person name="Woelfl S."/>
            <person name="Harris D.E."/>
            <person name="Bowman S."/>
            <person name="Brown D."/>
            <person name="Churcher C.M."/>
            <person name="Connor R."/>
            <person name="Dedman K."/>
            <person name="Gentles S."/>
            <person name="Hamlin N."/>
            <person name="Hunt S."/>
            <person name="Jones L."/>
            <person name="McDonald S."/>
            <person name="Murphy L.D."/>
            <person name="Niblett D."/>
            <person name="Odell C."/>
            <person name="Oliver K."/>
            <person name="Rajandream M.A."/>
            <person name="Richards C."/>
            <person name="Shore L."/>
            <person name="Walsh S.V."/>
            <person name="Barrell B.G."/>
            <person name="Dietrich F.S."/>
            <person name="Mulligan J.T."/>
            <person name="Allen E."/>
            <person name="Araujo R."/>
            <person name="Aviles E."/>
            <person name="Berno A."/>
            <person name="Carpenter J."/>
            <person name="Chen E."/>
            <person name="Cherry J.M."/>
            <person name="Chung E."/>
            <person name="Duncan M."/>
            <person name="Hunicke-Smith S."/>
            <person name="Hyman R.W."/>
            <person name="Komp C."/>
            <person name="Lashkari D."/>
            <person name="Lew H."/>
            <person name="Lin D."/>
            <person name="Mosedale D."/>
            <person name="Nakahara K."/>
            <person name="Namath A."/>
            <person name="Oefner P."/>
            <person name="Oh C."/>
            <person name="Petel F.X."/>
            <person name="Roberts D."/>
            <person name="Schramm S."/>
            <person name="Schroeder M."/>
            <person name="Shogren T."/>
            <person name="Shroff N."/>
            <person name="Winant A."/>
            <person name="Yelton M.A."/>
            <person name="Botstein D."/>
            <person name="Davis R.W."/>
            <person name="Johnston M."/>
            <person name="Andrews S."/>
            <person name="Brinkman R."/>
            <person name="Cooper J."/>
            <person name="Ding H."/>
            <person name="Du Z."/>
            <person name="Favello A."/>
            <person name="Fulton L."/>
            <person name="Gattung S."/>
            <person name="Greco T."/>
            <person name="Hallsworth K."/>
            <person name="Hawkins J."/>
            <person name="Hillier L.W."/>
            <person name="Jier M."/>
            <person name="Johnson D."/>
            <person name="Johnston L."/>
            <person name="Kirsten J."/>
            <person name="Kucaba T."/>
            <person name="Langston Y."/>
            <person name="Latreille P."/>
            <person name="Le T."/>
            <person name="Mardis E."/>
            <person name="Menezes S."/>
            <person name="Miller N."/>
            <person name="Nhan M."/>
            <person name="Pauley A."/>
            <person name="Peluso D."/>
            <person name="Rifkin L."/>
            <person name="Riles L."/>
            <person name="Taich A."/>
            <person name="Trevaskis E."/>
            <person name="Vignati D."/>
            <person name="Wilcox L."/>
            <person name="Wohldman P."/>
            <person name="Vaudin M."/>
            <person name="Wilson R."/>
            <person name="Waterston R."/>
            <person name="Albermann K."/>
            <person name="Hani J."/>
            <person name="Heumann K."/>
            <person name="Kleine K."/>
            <person name="Mewes H.-W."/>
            <person name="Zollner A."/>
            <person name="Zaccaria P."/>
        </authorList>
    </citation>
    <scope>NUCLEOTIDE SEQUENCE [LARGE SCALE GENOMIC DNA]</scope>
    <source>
        <strain>ATCC 204508 / S288c</strain>
    </source>
</reference>
<reference key="3">
    <citation type="journal article" date="2014" name="G3 (Bethesda)">
        <title>The reference genome sequence of Saccharomyces cerevisiae: Then and now.</title>
        <authorList>
            <person name="Engel S.R."/>
            <person name="Dietrich F.S."/>
            <person name="Fisk D.G."/>
            <person name="Binkley G."/>
            <person name="Balakrishnan R."/>
            <person name="Costanzo M.C."/>
            <person name="Dwight S.S."/>
            <person name="Hitz B.C."/>
            <person name="Karra K."/>
            <person name="Nash R.S."/>
            <person name="Weng S."/>
            <person name="Wong E.D."/>
            <person name="Lloyd P."/>
            <person name="Skrzypek M.S."/>
            <person name="Miyasato S.R."/>
            <person name="Simison M."/>
            <person name="Cherry J.M."/>
        </authorList>
    </citation>
    <scope>GENOME REANNOTATION</scope>
    <source>
        <strain>ATCC 204508 / S288c</strain>
    </source>
</reference>
<reference key="4">
    <citation type="journal article" date="2003" name="J. Biol. Chem.">
        <title>Competitive promoter occupancy by two yeast paralogous transcription factors controlling the multidrug resistance phenomenon.</title>
        <authorList>
            <person name="Lucau-Danila A."/>
            <person name="Delaveau T."/>
            <person name="Lelandais G."/>
            <person name="Devaux F."/>
            <person name="Jacq C."/>
        </authorList>
    </citation>
    <scope>INDUCTION</scope>
</reference>
<reference key="5">
    <citation type="journal article" date="2003" name="Nature">
        <title>Global analysis of protein localization in budding yeast.</title>
        <authorList>
            <person name="Huh W.-K."/>
            <person name="Falvo J.V."/>
            <person name="Gerke L.C."/>
            <person name="Carroll A.S."/>
            <person name="Howson R.W."/>
            <person name="Weissman J.S."/>
            <person name="O'Shea E.K."/>
        </authorList>
    </citation>
    <scope>SUBCELLULAR LOCATION [LARGE SCALE ANALYSIS]</scope>
</reference>
<reference key="6">
    <citation type="journal article" date="2003" name="Nature">
        <title>Global analysis of protein expression in yeast.</title>
        <authorList>
            <person name="Ghaemmaghami S."/>
            <person name="Huh W.-K."/>
            <person name="Bower K."/>
            <person name="Howson R.W."/>
            <person name="Belle A."/>
            <person name="Dephoure N."/>
            <person name="O'Shea E.K."/>
            <person name="Weissman J.S."/>
        </authorList>
    </citation>
    <scope>LEVEL OF PROTEIN EXPRESSION [LARGE SCALE ANALYSIS]</scope>
</reference>
<reference key="7">
    <citation type="journal article" date="2006" name="J. Proteome Res.">
        <title>Toward the complete yeast mitochondrial proteome: multidimensional separation techniques for mitochondrial proteomics.</title>
        <authorList>
            <person name="Reinders J."/>
            <person name="Zahedi R.P."/>
            <person name="Pfanner N."/>
            <person name="Meisinger C."/>
            <person name="Sickmann A."/>
        </authorList>
    </citation>
    <scope>SUBCELLULAR LOCATION [LARGE SCALE ANALYSIS]</scope>
    <scope>IDENTIFICATION BY MASS SPECTROMETRY</scope>
</reference>
<organism>
    <name type="scientific">Saccharomyces cerevisiae (strain ATCC 204508 / S288c)</name>
    <name type="common">Baker's yeast</name>
    <dbReference type="NCBI Taxonomy" id="559292"/>
    <lineage>
        <taxon>Eukaryota</taxon>
        <taxon>Fungi</taxon>
        <taxon>Dikarya</taxon>
        <taxon>Ascomycota</taxon>
        <taxon>Saccharomycotina</taxon>
        <taxon>Saccharomycetes</taxon>
        <taxon>Saccharomycetales</taxon>
        <taxon>Saccharomycetaceae</taxon>
        <taxon>Saccharomyces</taxon>
    </lineage>
</organism>
<comment type="subcellular location">
    <subcellularLocation>
        <location evidence="3 5">Mitochondrion</location>
    </subcellularLocation>
</comment>
<comment type="induction">
    <text evidence="2">Induced by transcription factor YRM1.</text>
</comment>
<comment type="miscellaneous">
    <text evidence="4">Present with 1580 molecules/cell in log phase SD medium.</text>
</comment>
<comment type="similarity">
    <text evidence="6">Belongs to the ABC transporter superfamily.</text>
</comment>
<dbReference type="EMBL" id="X84162">
    <property type="protein sequence ID" value="CAA58977.1"/>
    <property type="molecule type" value="Genomic_DNA"/>
</dbReference>
<dbReference type="EMBL" id="Z49209">
    <property type="protein sequence ID" value="CAA89090.1"/>
    <property type="molecule type" value="Genomic_DNA"/>
</dbReference>
<dbReference type="EMBL" id="Z74357">
    <property type="protein sequence ID" value="CAA98879.1"/>
    <property type="molecule type" value="Genomic_DNA"/>
</dbReference>
<dbReference type="EMBL" id="BK006938">
    <property type="protein sequence ID" value="DAA11907.1"/>
    <property type="molecule type" value="Genomic_DNA"/>
</dbReference>
<dbReference type="PIR" id="S54045">
    <property type="entry name" value="S54045"/>
</dbReference>
<dbReference type="RefSeq" id="NP_010346.3">
    <property type="nucleotide sequence ID" value="NM_001180369.3"/>
</dbReference>
<dbReference type="SMR" id="Q12298"/>
<dbReference type="BioGRID" id="32116">
    <property type="interactions" value="141"/>
</dbReference>
<dbReference type="DIP" id="DIP-1817N"/>
<dbReference type="FunCoup" id="Q12298">
    <property type="interactions" value="73"/>
</dbReference>
<dbReference type="IntAct" id="Q12298">
    <property type="interactions" value="9"/>
</dbReference>
<dbReference type="MINT" id="Q12298"/>
<dbReference type="STRING" id="4932.YDR061W"/>
<dbReference type="PaxDb" id="4932-YDR061W"/>
<dbReference type="PeptideAtlas" id="Q12298"/>
<dbReference type="EnsemblFungi" id="YDR061W_mRNA">
    <property type="protein sequence ID" value="YDR061W"/>
    <property type="gene ID" value="YDR061W"/>
</dbReference>
<dbReference type="GeneID" id="851633"/>
<dbReference type="KEGG" id="sce:YDR061W"/>
<dbReference type="AGR" id="SGD:S000002468"/>
<dbReference type="SGD" id="S000002468">
    <property type="gene designation" value="YDR061W"/>
</dbReference>
<dbReference type="VEuPathDB" id="FungiDB:YDR061W"/>
<dbReference type="eggNOG" id="KOG0927">
    <property type="taxonomic scope" value="Eukaryota"/>
</dbReference>
<dbReference type="HOGENOM" id="CLU_000604_45_3_1"/>
<dbReference type="InParanoid" id="Q12298"/>
<dbReference type="OMA" id="WEIKKHI"/>
<dbReference type="OrthoDB" id="10255969at2759"/>
<dbReference type="BioCyc" id="YEAST:G3O-29669-MONOMER"/>
<dbReference type="BioGRID-ORCS" id="851633">
    <property type="hits" value="1 hit in 10 CRISPR screens"/>
</dbReference>
<dbReference type="PRO" id="PR:Q12298"/>
<dbReference type="Proteomes" id="UP000002311">
    <property type="component" value="Chromosome IV"/>
</dbReference>
<dbReference type="RNAct" id="Q12298">
    <property type="molecule type" value="protein"/>
</dbReference>
<dbReference type="GO" id="GO:0005739">
    <property type="term" value="C:mitochondrion"/>
    <property type="evidence" value="ECO:0007005"/>
    <property type="project" value="SGD"/>
</dbReference>
<dbReference type="GO" id="GO:0005524">
    <property type="term" value="F:ATP binding"/>
    <property type="evidence" value="ECO:0007669"/>
    <property type="project" value="UniProtKB-KW"/>
</dbReference>
<dbReference type="GO" id="GO:0016887">
    <property type="term" value="F:ATP hydrolysis activity"/>
    <property type="evidence" value="ECO:0007669"/>
    <property type="project" value="InterPro"/>
</dbReference>
<dbReference type="Gene3D" id="3.40.50.300">
    <property type="entry name" value="P-loop containing nucleotide triphosphate hydrolases"/>
    <property type="match status" value="2"/>
</dbReference>
<dbReference type="InterPro" id="IPR003593">
    <property type="entry name" value="AAA+_ATPase"/>
</dbReference>
<dbReference type="InterPro" id="IPR003439">
    <property type="entry name" value="ABC_transporter-like_ATP-bd"/>
</dbReference>
<dbReference type="InterPro" id="IPR050334">
    <property type="entry name" value="Molybdenum_import_ModC"/>
</dbReference>
<dbReference type="InterPro" id="IPR027417">
    <property type="entry name" value="P-loop_NTPase"/>
</dbReference>
<dbReference type="PANTHER" id="PTHR43514">
    <property type="entry name" value="ABC TRANSPORTER I FAMILY MEMBER 10"/>
    <property type="match status" value="1"/>
</dbReference>
<dbReference type="PANTHER" id="PTHR43514:SF4">
    <property type="entry name" value="ABC TRANSPORTER I FAMILY MEMBER 10"/>
    <property type="match status" value="1"/>
</dbReference>
<dbReference type="Pfam" id="PF00005">
    <property type="entry name" value="ABC_tran"/>
    <property type="match status" value="2"/>
</dbReference>
<dbReference type="SMART" id="SM00382">
    <property type="entry name" value="AAA"/>
    <property type="match status" value="1"/>
</dbReference>
<dbReference type="SUPFAM" id="SSF52540">
    <property type="entry name" value="P-loop containing nucleoside triphosphate hydrolases"/>
    <property type="match status" value="2"/>
</dbReference>
<dbReference type="PROSITE" id="PS50893">
    <property type="entry name" value="ABC_TRANSPORTER_2"/>
    <property type="match status" value="2"/>
</dbReference>
<keyword id="KW-0067">ATP-binding</keyword>
<keyword id="KW-0496">Mitochondrion</keyword>
<keyword id="KW-0547">Nucleotide-binding</keyword>
<keyword id="KW-1185">Reference proteome</keyword>
<keyword id="KW-0677">Repeat</keyword>
<evidence type="ECO:0000255" key="1">
    <source>
        <dbReference type="PROSITE-ProRule" id="PRU00434"/>
    </source>
</evidence>
<evidence type="ECO:0000269" key="2">
    <source>
    </source>
</evidence>
<evidence type="ECO:0000269" key="3">
    <source>
    </source>
</evidence>
<evidence type="ECO:0000269" key="4">
    <source>
    </source>
</evidence>
<evidence type="ECO:0000269" key="5">
    <source>
    </source>
</evidence>
<evidence type="ECO:0000305" key="6"/>
<accession>Q12298</accession>
<accession>D6VS47</accession>
<protein>
    <recommendedName>
        <fullName>Uncharacterized ABC transporter ATP-binding protein YDR061W</fullName>
    </recommendedName>
</protein>
<sequence length="539" mass="61191">MSTNKFVVRITNALFKSSLASNSPPVYPKRIRHFEILPNEKWVIWGPGKGKFLDVLNNKYICEPPLSLRFGFLKESSNILPRIEQVAFKGVMPTAHLSARYEYFKDDYDQTCKQFIFDKASGSNAVSYKVETNNRQINMELYNALVENLNLSSLQDRWVMGLSNGQMRRARLARSILKEPDLLLIDDPFLGLDPAAIATISQFLAKYDSIEVSGGCPIVIGLRYQDTIPAWCTHICCVDEKNGILFEGPIEKLQSKMDETRSRALKELEQLKKASNSKEDISINDLICIHPMYGKKEHEIIKMPHLIELDGLSVSYKGEAVLENLHWKVQPGSKWHIRGDNGSGKSTLLSLLTAEHPQSWNSRVIDNGVPRRTGKTNYFDLNSKIGMSSPELHAIFLKNAGGRLNIRESVATGYHEASSNNYLPIWKRLDKNSQEIVNMYLKYFGLDKDADSVLFEQLSVSDQKLVLFVRSLIKMPQILILDEAFSGMEVEPMMRCHEFLEEWPGTVLVVAHVAEETPKCAHYLRLISPGEYEIGDMEN</sequence>
<gene>
    <name type="ordered locus">YDR061W</name>
    <name type="ORF">D4241</name>
</gene>
<proteinExistence type="evidence at protein level"/>
<name>YD061_YEAST</name>